<protein>
    <recommendedName>
        <fullName evidence="1">Tyrosine--tRNA ligase</fullName>
        <ecNumber evidence="1">6.1.1.1</ecNumber>
    </recommendedName>
    <alternativeName>
        <fullName evidence="1">Tyrosyl-tRNA synthetase</fullName>
        <shortName evidence="1">TyrRS</shortName>
    </alternativeName>
</protein>
<dbReference type="EC" id="6.1.1.1" evidence="1"/>
<dbReference type="EMBL" id="AM263198">
    <property type="protein sequence ID" value="CAK21030.1"/>
    <property type="molecule type" value="Genomic_DNA"/>
</dbReference>
<dbReference type="RefSeq" id="WP_011702396.1">
    <property type="nucleotide sequence ID" value="NC_008555.1"/>
</dbReference>
<dbReference type="SMR" id="A0AJ48"/>
<dbReference type="STRING" id="386043.lwe1612"/>
<dbReference type="GeneID" id="61189489"/>
<dbReference type="KEGG" id="lwe:lwe1612"/>
<dbReference type="eggNOG" id="COG0162">
    <property type="taxonomic scope" value="Bacteria"/>
</dbReference>
<dbReference type="HOGENOM" id="CLU_024003_0_3_9"/>
<dbReference type="OrthoDB" id="9804243at2"/>
<dbReference type="Proteomes" id="UP000000779">
    <property type="component" value="Chromosome"/>
</dbReference>
<dbReference type="GO" id="GO:0005829">
    <property type="term" value="C:cytosol"/>
    <property type="evidence" value="ECO:0007669"/>
    <property type="project" value="TreeGrafter"/>
</dbReference>
<dbReference type="GO" id="GO:0005524">
    <property type="term" value="F:ATP binding"/>
    <property type="evidence" value="ECO:0007669"/>
    <property type="project" value="UniProtKB-UniRule"/>
</dbReference>
<dbReference type="GO" id="GO:0003723">
    <property type="term" value="F:RNA binding"/>
    <property type="evidence" value="ECO:0007669"/>
    <property type="project" value="UniProtKB-KW"/>
</dbReference>
<dbReference type="GO" id="GO:0004831">
    <property type="term" value="F:tyrosine-tRNA ligase activity"/>
    <property type="evidence" value="ECO:0007669"/>
    <property type="project" value="UniProtKB-UniRule"/>
</dbReference>
<dbReference type="GO" id="GO:0006437">
    <property type="term" value="P:tyrosyl-tRNA aminoacylation"/>
    <property type="evidence" value="ECO:0007669"/>
    <property type="project" value="UniProtKB-UniRule"/>
</dbReference>
<dbReference type="CDD" id="cd00165">
    <property type="entry name" value="S4"/>
    <property type="match status" value="1"/>
</dbReference>
<dbReference type="CDD" id="cd00805">
    <property type="entry name" value="TyrRS_core"/>
    <property type="match status" value="1"/>
</dbReference>
<dbReference type="FunFam" id="1.10.240.10:FF:000001">
    <property type="entry name" value="Tyrosine--tRNA ligase"/>
    <property type="match status" value="1"/>
</dbReference>
<dbReference type="FunFam" id="3.10.290.10:FF:000012">
    <property type="entry name" value="Tyrosine--tRNA ligase"/>
    <property type="match status" value="1"/>
</dbReference>
<dbReference type="FunFam" id="3.40.50.620:FF:000008">
    <property type="entry name" value="Tyrosine--tRNA ligase"/>
    <property type="match status" value="1"/>
</dbReference>
<dbReference type="Gene3D" id="3.40.50.620">
    <property type="entry name" value="HUPs"/>
    <property type="match status" value="1"/>
</dbReference>
<dbReference type="Gene3D" id="3.10.290.10">
    <property type="entry name" value="RNA-binding S4 domain"/>
    <property type="match status" value="1"/>
</dbReference>
<dbReference type="Gene3D" id="1.10.240.10">
    <property type="entry name" value="Tyrosyl-Transfer RNA Synthetase"/>
    <property type="match status" value="1"/>
</dbReference>
<dbReference type="HAMAP" id="MF_02006">
    <property type="entry name" value="Tyr_tRNA_synth_type1"/>
    <property type="match status" value="1"/>
</dbReference>
<dbReference type="InterPro" id="IPR001412">
    <property type="entry name" value="aa-tRNA-synth_I_CS"/>
</dbReference>
<dbReference type="InterPro" id="IPR002305">
    <property type="entry name" value="aa-tRNA-synth_Ic"/>
</dbReference>
<dbReference type="InterPro" id="IPR014729">
    <property type="entry name" value="Rossmann-like_a/b/a_fold"/>
</dbReference>
<dbReference type="InterPro" id="IPR002942">
    <property type="entry name" value="S4_RNA-bd"/>
</dbReference>
<dbReference type="InterPro" id="IPR036986">
    <property type="entry name" value="S4_RNA-bd_sf"/>
</dbReference>
<dbReference type="InterPro" id="IPR054608">
    <property type="entry name" value="SYY-like_C"/>
</dbReference>
<dbReference type="InterPro" id="IPR002307">
    <property type="entry name" value="Tyr-tRNA-ligase"/>
</dbReference>
<dbReference type="InterPro" id="IPR024088">
    <property type="entry name" value="Tyr-tRNA-ligase_bac-type"/>
</dbReference>
<dbReference type="InterPro" id="IPR024107">
    <property type="entry name" value="Tyr-tRNA-ligase_bac_1"/>
</dbReference>
<dbReference type="NCBIfam" id="TIGR00234">
    <property type="entry name" value="tyrS"/>
    <property type="match status" value="1"/>
</dbReference>
<dbReference type="PANTHER" id="PTHR11766:SF0">
    <property type="entry name" value="TYROSINE--TRNA LIGASE, MITOCHONDRIAL"/>
    <property type="match status" value="1"/>
</dbReference>
<dbReference type="PANTHER" id="PTHR11766">
    <property type="entry name" value="TYROSYL-TRNA SYNTHETASE"/>
    <property type="match status" value="1"/>
</dbReference>
<dbReference type="Pfam" id="PF22421">
    <property type="entry name" value="SYY_C-terminal"/>
    <property type="match status" value="1"/>
</dbReference>
<dbReference type="Pfam" id="PF00579">
    <property type="entry name" value="tRNA-synt_1b"/>
    <property type="match status" value="1"/>
</dbReference>
<dbReference type="PRINTS" id="PR01040">
    <property type="entry name" value="TRNASYNTHTYR"/>
</dbReference>
<dbReference type="SMART" id="SM00363">
    <property type="entry name" value="S4"/>
    <property type="match status" value="1"/>
</dbReference>
<dbReference type="SUPFAM" id="SSF55174">
    <property type="entry name" value="Alpha-L RNA-binding motif"/>
    <property type="match status" value="1"/>
</dbReference>
<dbReference type="SUPFAM" id="SSF52374">
    <property type="entry name" value="Nucleotidylyl transferase"/>
    <property type="match status" value="1"/>
</dbReference>
<dbReference type="PROSITE" id="PS00178">
    <property type="entry name" value="AA_TRNA_LIGASE_I"/>
    <property type="match status" value="1"/>
</dbReference>
<dbReference type="PROSITE" id="PS50889">
    <property type="entry name" value="S4"/>
    <property type="match status" value="1"/>
</dbReference>
<organism>
    <name type="scientific">Listeria welshimeri serovar 6b (strain ATCC 35897 / DSM 20650 / CCUG 15529 / CIP 8149 / NCTC 11857 / SLCC 5334 / V8)</name>
    <dbReference type="NCBI Taxonomy" id="386043"/>
    <lineage>
        <taxon>Bacteria</taxon>
        <taxon>Bacillati</taxon>
        <taxon>Bacillota</taxon>
        <taxon>Bacilli</taxon>
        <taxon>Bacillales</taxon>
        <taxon>Listeriaceae</taxon>
        <taxon>Listeria</taxon>
    </lineage>
</organism>
<gene>
    <name evidence="1" type="primary">tyrS</name>
    <name type="ordered locus">lwe1612</name>
</gene>
<name>SYY_LISW6</name>
<reference key="1">
    <citation type="journal article" date="2006" name="J. Bacteriol.">
        <title>Whole-genome sequence of Listeria welshimeri reveals common steps in genome reduction with Listeria innocua as compared to Listeria monocytogenes.</title>
        <authorList>
            <person name="Hain T."/>
            <person name="Steinweg C."/>
            <person name="Kuenne C.T."/>
            <person name="Billion A."/>
            <person name="Ghai R."/>
            <person name="Chatterjee S.S."/>
            <person name="Domann E."/>
            <person name="Kaerst U."/>
            <person name="Goesmann A."/>
            <person name="Bekel T."/>
            <person name="Bartels D."/>
            <person name="Kaiser O."/>
            <person name="Meyer F."/>
            <person name="Puehler A."/>
            <person name="Weisshaar B."/>
            <person name="Wehland J."/>
            <person name="Liang C."/>
            <person name="Dandekar T."/>
            <person name="Lampidis R."/>
            <person name="Kreft J."/>
            <person name="Goebel W."/>
            <person name="Chakraborty T."/>
        </authorList>
    </citation>
    <scope>NUCLEOTIDE SEQUENCE [LARGE SCALE GENOMIC DNA]</scope>
    <source>
        <strain>ATCC 35897 / DSM 20650 / CCUG 15529 / CIP 8149 / NCTC 11857 / SLCC 5334 / V8</strain>
    </source>
</reference>
<keyword id="KW-0030">Aminoacyl-tRNA synthetase</keyword>
<keyword id="KW-0067">ATP-binding</keyword>
<keyword id="KW-0963">Cytoplasm</keyword>
<keyword id="KW-0436">Ligase</keyword>
<keyword id="KW-0547">Nucleotide-binding</keyword>
<keyword id="KW-0648">Protein biosynthesis</keyword>
<keyword id="KW-0694">RNA-binding</keyword>
<comment type="function">
    <text evidence="1">Catalyzes the attachment of tyrosine to tRNA(Tyr) in a two-step reaction: tyrosine is first activated by ATP to form Tyr-AMP and then transferred to the acceptor end of tRNA(Tyr).</text>
</comment>
<comment type="catalytic activity">
    <reaction evidence="1">
        <text>tRNA(Tyr) + L-tyrosine + ATP = L-tyrosyl-tRNA(Tyr) + AMP + diphosphate + H(+)</text>
        <dbReference type="Rhea" id="RHEA:10220"/>
        <dbReference type="Rhea" id="RHEA-COMP:9706"/>
        <dbReference type="Rhea" id="RHEA-COMP:9707"/>
        <dbReference type="ChEBI" id="CHEBI:15378"/>
        <dbReference type="ChEBI" id="CHEBI:30616"/>
        <dbReference type="ChEBI" id="CHEBI:33019"/>
        <dbReference type="ChEBI" id="CHEBI:58315"/>
        <dbReference type="ChEBI" id="CHEBI:78442"/>
        <dbReference type="ChEBI" id="CHEBI:78536"/>
        <dbReference type="ChEBI" id="CHEBI:456215"/>
        <dbReference type="EC" id="6.1.1.1"/>
    </reaction>
</comment>
<comment type="subunit">
    <text evidence="1">Homodimer.</text>
</comment>
<comment type="subcellular location">
    <subcellularLocation>
        <location evidence="1">Cytoplasm</location>
    </subcellularLocation>
</comment>
<comment type="similarity">
    <text evidence="1">Belongs to the class-I aminoacyl-tRNA synthetase family. TyrS type 1 subfamily.</text>
</comment>
<sequence length="419" mass="47649">MNIIDELEWRGAIYQQTDEEGLRKWVEEKQISLYCGIDPSGDSMHIGHLIPFMILRRFQNAGHRPIILVGGATGTIGDPSGKKEERKLQSMEQISRNVESLRVQLGKIFDFEGDSAASMVNNYDWTKDVSILDFLRDYGKEFNVNTMLSKDIVASRLEVGISFTEFAYQILQAMDFNHLYEFNDCRLQIGGSDQWGNITAGLDLIRKKQGENAKAFGLTIPLLTKADGTKFGKSEGGAIWLNPEKTTPYEFYQFWINTDDRDVVKYLKYFTFLTETEIDELAKKVEEEPHLRAAQKTLAAEMTKFVHSEEALEQALKISKALFSGDVTALTADEIEQGFKDVPTFVAEDAEVNLVDWLVSLGIEPSKRQAREDVTNGAIYINGERQQNVEKVIDASDRIENKFTIVRRGKKKYFLVSYK</sequence>
<proteinExistence type="inferred from homology"/>
<feature type="chain" id="PRO_1000088600" description="Tyrosine--tRNA ligase">
    <location>
        <begin position="1"/>
        <end position="419"/>
    </location>
</feature>
<feature type="domain" description="S4 RNA-binding" evidence="1">
    <location>
        <begin position="352"/>
        <end position="418"/>
    </location>
</feature>
<feature type="short sequence motif" description="'HIGH' region">
    <location>
        <begin position="39"/>
        <end position="48"/>
    </location>
</feature>
<feature type="short sequence motif" description="'KMSKS' region">
    <location>
        <begin position="230"/>
        <end position="234"/>
    </location>
</feature>
<feature type="binding site" evidence="1">
    <location>
        <position position="34"/>
    </location>
    <ligand>
        <name>L-tyrosine</name>
        <dbReference type="ChEBI" id="CHEBI:58315"/>
    </ligand>
</feature>
<feature type="binding site" evidence="1">
    <location>
        <position position="168"/>
    </location>
    <ligand>
        <name>L-tyrosine</name>
        <dbReference type="ChEBI" id="CHEBI:58315"/>
    </ligand>
</feature>
<feature type="binding site" evidence="1">
    <location>
        <position position="172"/>
    </location>
    <ligand>
        <name>L-tyrosine</name>
        <dbReference type="ChEBI" id="CHEBI:58315"/>
    </ligand>
</feature>
<feature type="binding site" evidence="1">
    <location>
        <position position="233"/>
    </location>
    <ligand>
        <name>ATP</name>
        <dbReference type="ChEBI" id="CHEBI:30616"/>
    </ligand>
</feature>
<accession>A0AJ48</accession>
<evidence type="ECO:0000255" key="1">
    <source>
        <dbReference type="HAMAP-Rule" id="MF_02006"/>
    </source>
</evidence>